<gene>
    <name evidence="1" type="primary">hisF</name>
    <name type="ordered locus">EFER_2108</name>
</gene>
<comment type="function">
    <text evidence="1">IGPS catalyzes the conversion of PRFAR and glutamine to IGP, AICAR and glutamate. The HisF subunit catalyzes the cyclization activity that produces IGP and AICAR from PRFAR using the ammonia provided by the HisH subunit.</text>
</comment>
<comment type="catalytic activity">
    <reaction evidence="1">
        <text>5-[(5-phospho-1-deoxy-D-ribulos-1-ylimino)methylamino]-1-(5-phospho-beta-D-ribosyl)imidazole-4-carboxamide + L-glutamine = D-erythro-1-(imidazol-4-yl)glycerol 3-phosphate + 5-amino-1-(5-phospho-beta-D-ribosyl)imidazole-4-carboxamide + L-glutamate + H(+)</text>
        <dbReference type="Rhea" id="RHEA:24793"/>
        <dbReference type="ChEBI" id="CHEBI:15378"/>
        <dbReference type="ChEBI" id="CHEBI:29985"/>
        <dbReference type="ChEBI" id="CHEBI:58278"/>
        <dbReference type="ChEBI" id="CHEBI:58359"/>
        <dbReference type="ChEBI" id="CHEBI:58475"/>
        <dbReference type="ChEBI" id="CHEBI:58525"/>
        <dbReference type="EC" id="4.3.2.10"/>
    </reaction>
</comment>
<comment type="pathway">
    <text evidence="1">Amino-acid biosynthesis; L-histidine biosynthesis; L-histidine from 5-phospho-alpha-D-ribose 1-diphosphate: step 5/9.</text>
</comment>
<comment type="subunit">
    <text evidence="1">Heterodimer of HisH and HisF.</text>
</comment>
<comment type="subcellular location">
    <subcellularLocation>
        <location evidence="1">Cytoplasm</location>
    </subcellularLocation>
</comment>
<comment type="similarity">
    <text evidence="1">Belongs to the HisA/HisF family.</text>
</comment>
<sequence length="258" mass="28454">MLAKRIIPCLDVRDGQVVKGVQFRNHEIIGDIVPLAKRYAEEGADELVFYDITASSDGRVVDKSWVSRVAEVIDIPFCVAGGIKSLDDAAKILSFGADKISINSPALADPTLITRLADRFGVQCIVVGIDTWYDAETGKYHVNQYTGDESRTRVTQWETLEWVQEVQKRGAGEIVLNMMNQDGVRNGYDLEQLKKVREVCHVPLIASGGAGTMEHFLEAFRDADVDGALAASVFHKQIINIGELKAYLATQGVEIRIC</sequence>
<protein>
    <recommendedName>
        <fullName evidence="1">Imidazole glycerol phosphate synthase subunit HisF</fullName>
        <ecNumber evidence="1">4.3.2.10</ecNumber>
    </recommendedName>
    <alternativeName>
        <fullName evidence="1">IGP synthase cyclase subunit</fullName>
    </alternativeName>
    <alternativeName>
        <fullName evidence="1">IGP synthase subunit HisF</fullName>
    </alternativeName>
    <alternativeName>
        <fullName evidence="1">ImGP synthase subunit HisF</fullName>
        <shortName evidence="1">IGPS subunit HisF</shortName>
    </alternativeName>
</protein>
<dbReference type="EC" id="4.3.2.10" evidence="1"/>
<dbReference type="EMBL" id="CU928158">
    <property type="protein sequence ID" value="CAQ89611.1"/>
    <property type="molecule type" value="Genomic_DNA"/>
</dbReference>
<dbReference type="RefSeq" id="WP_000880158.1">
    <property type="nucleotide sequence ID" value="NC_011740.1"/>
</dbReference>
<dbReference type="SMR" id="B7LUF6"/>
<dbReference type="GeneID" id="75203891"/>
<dbReference type="KEGG" id="efe:EFER_2108"/>
<dbReference type="HOGENOM" id="CLU_048577_4_0_6"/>
<dbReference type="OrthoDB" id="9781903at2"/>
<dbReference type="UniPathway" id="UPA00031">
    <property type="reaction ID" value="UER00010"/>
</dbReference>
<dbReference type="Proteomes" id="UP000000745">
    <property type="component" value="Chromosome"/>
</dbReference>
<dbReference type="GO" id="GO:0005737">
    <property type="term" value="C:cytoplasm"/>
    <property type="evidence" value="ECO:0007669"/>
    <property type="project" value="UniProtKB-SubCell"/>
</dbReference>
<dbReference type="GO" id="GO:0000107">
    <property type="term" value="F:imidazoleglycerol-phosphate synthase activity"/>
    <property type="evidence" value="ECO:0007669"/>
    <property type="project" value="UniProtKB-UniRule"/>
</dbReference>
<dbReference type="GO" id="GO:0016829">
    <property type="term" value="F:lyase activity"/>
    <property type="evidence" value="ECO:0007669"/>
    <property type="project" value="UniProtKB-KW"/>
</dbReference>
<dbReference type="GO" id="GO:0000105">
    <property type="term" value="P:L-histidine biosynthetic process"/>
    <property type="evidence" value="ECO:0007669"/>
    <property type="project" value="UniProtKB-UniRule"/>
</dbReference>
<dbReference type="CDD" id="cd04731">
    <property type="entry name" value="HisF"/>
    <property type="match status" value="1"/>
</dbReference>
<dbReference type="FunFam" id="3.20.20.70:FF:000006">
    <property type="entry name" value="Imidazole glycerol phosphate synthase subunit HisF"/>
    <property type="match status" value="1"/>
</dbReference>
<dbReference type="Gene3D" id="3.20.20.70">
    <property type="entry name" value="Aldolase class I"/>
    <property type="match status" value="1"/>
</dbReference>
<dbReference type="HAMAP" id="MF_01013">
    <property type="entry name" value="HisF"/>
    <property type="match status" value="1"/>
</dbReference>
<dbReference type="InterPro" id="IPR013785">
    <property type="entry name" value="Aldolase_TIM"/>
</dbReference>
<dbReference type="InterPro" id="IPR006062">
    <property type="entry name" value="His_biosynth"/>
</dbReference>
<dbReference type="InterPro" id="IPR004651">
    <property type="entry name" value="HisF"/>
</dbReference>
<dbReference type="InterPro" id="IPR050064">
    <property type="entry name" value="IGPS_HisA/HisF"/>
</dbReference>
<dbReference type="InterPro" id="IPR011060">
    <property type="entry name" value="RibuloseP-bd_barrel"/>
</dbReference>
<dbReference type="NCBIfam" id="TIGR00735">
    <property type="entry name" value="hisF"/>
    <property type="match status" value="1"/>
</dbReference>
<dbReference type="PANTHER" id="PTHR21235:SF2">
    <property type="entry name" value="IMIDAZOLE GLYCEROL PHOSPHATE SYNTHASE HISHF"/>
    <property type="match status" value="1"/>
</dbReference>
<dbReference type="PANTHER" id="PTHR21235">
    <property type="entry name" value="IMIDAZOLE GLYCEROL PHOSPHATE SYNTHASE SUBUNIT HISF/H IGP SYNTHASE SUBUNIT HISF/H"/>
    <property type="match status" value="1"/>
</dbReference>
<dbReference type="Pfam" id="PF00977">
    <property type="entry name" value="His_biosynth"/>
    <property type="match status" value="1"/>
</dbReference>
<dbReference type="SUPFAM" id="SSF51366">
    <property type="entry name" value="Ribulose-phoshate binding barrel"/>
    <property type="match status" value="1"/>
</dbReference>
<keyword id="KW-0028">Amino-acid biosynthesis</keyword>
<keyword id="KW-0963">Cytoplasm</keyword>
<keyword id="KW-0368">Histidine biosynthesis</keyword>
<keyword id="KW-0456">Lyase</keyword>
<organism>
    <name type="scientific">Escherichia fergusonii (strain ATCC 35469 / DSM 13698 / CCUG 18766 / IAM 14443 / JCM 21226 / LMG 7866 / NBRC 102419 / NCTC 12128 / CDC 0568-73)</name>
    <dbReference type="NCBI Taxonomy" id="585054"/>
    <lineage>
        <taxon>Bacteria</taxon>
        <taxon>Pseudomonadati</taxon>
        <taxon>Pseudomonadota</taxon>
        <taxon>Gammaproteobacteria</taxon>
        <taxon>Enterobacterales</taxon>
        <taxon>Enterobacteriaceae</taxon>
        <taxon>Escherichia</taxon>
    </lineage>
</organism>
<proteinExistence type="inferred from homology"/>
<reference key="1">
    <citation type="journal article" date="2009" name="PLoS Genet.">
        <title>Organised genome dynamics in the Escherichia coli species results in highly diverse adaptive paths.</title>
        <authorList>
            <person name="Touchon M."/>
            <person name="Hoede C."/>
            <person name="Tenaillon O."/>
            <person name="Barbe V."/>
            <person name="Baeriswyl S."/>
            <person name="Bidet P."/>
            <person name="Bingen E."/>
            <person name="Bonacorsi S."/>
            <person name="Bouchier C."/>
            <person name="Bouvet O."/>
            <person name="Calteau A."/>
            <person name="Chiapello H."/>
            <person name="Clermont O."/>
            <person name="Cruveiller S."/>
            <person name="Danchin A."/>
            <person name="Diard M."/>
            <person name="Dossat C."/>
            <person name="Karoui M.E."/>
            <person name="Frapy E."/>
            <person name="Garry L."/>
            <person name="Ghigo J.M."/>
            <person name="Gilles A.M."/>
            <person name="Johnson J."/>
            <person name="Le Bouguenec C."/>
            <person name="Lescat M."/>
            <person name="Mangenot S."/>
            <person name="Martinez-Jehanne V."/>
            <person name="Matic I."/>
            <person name="Nassif X."/>
            <person name="Oztas S."/>
            <person name="Petit M.A."/>
            <person name="Pichon C."/>
            <person name="Rouy Z."/>
            <person name="Ruf C.S."/>
            <person name="Schneider D."/>
            <person name="Tourret J."/>
            <person name="Vacherie B."/>
            <person name="Vallenet D."/>
            <person name="Medigue C."/>
            <person name="Rocha E.P.C."/>
            <person name="Denamur E."/>
        </authorList>
    </citation>
    <scope>NUCLEOTIDE SEQUENCE [LARGE SCALE GENOMIC DNA]</scope>
    <source>
        <strain>ATCC 35469 / DSM 13698 / BCRC 15582 / CCUG 18766 / IAM 14443 / JCM 21226 / LMG 7866 / NBRC 102419 / NCTC 12128 / CDC 0568-73</strain>
    </source>
</reference>
<name>HIS6_ESCF3</name>
<evidence type="ECO:0000255" key="1">
    <source>
        <dbReference type="HAMAP-Rule" id="MF_01013"/>
    </source>
</evidence>
<feature type="chain" id="PRO_1000135002" description="Imidazole glycerol phosphate synthase subunit HisF">
    <location>
        <begin position="1"/>
        <end position="258"/>
    </location>
</feature>
<feature type="active site" evidence="1">
    <location>
        <position position="11"/>
    </location>
</feature>
<feature type="active site" evidence="1">
    <location>
        <position position="130"/>
    </location>
</feature>
<accession>B7LUF6</accession>